<evidence type="ECO:0000255" key="1">
    <source>
        <dbReference type="HAMAP-Rule" id="MF_01622"/>
    </source>
</evidence>
<dbReference type="EC" id="2.9.1.3" evidence="1"/>
<dbReference type="EMBL" id="CP000542">
    <property type="protein sequence ID" value="ABM57380.1"/>
    <property type="molecule type" value="Genomic_DNA"/>
</dbReference>
<dbReference type="RefSeq" id="WP_011809387.1">
    <property type="nucleotide sequence ID" value="NC_008786.1"/>
</dbReference>
<dbReference type="SMR" id="A1WIC3"/>
<dbReference type="STRING" id="391735.Veis_1622"/>
<dbReference type="GeneID" id="76460235"/>
<dbReference type="KEGG" id="vei:Veis_1622"/>
<dbReference type="eggNOG" id="COG2603">
    <property type="taxonomic scope" value="Bacteria"/>
</dbReference>
<dbReference type="HOGENOM" id="CLU_043456_1_0_4"/>
<dbReference type="OrthoDB" id="9808735at2"/>
<dbReference type="Proteomes" id="UP000000374">
    <property type="component" value="Chromosome"/>
</dbReference>
<dbReference type="GO" id="GO:0016765">
    <property type="term" value="F:transferase activity, transferring alkyl or aryl (other than methyl) groups"/>
    <property type="evidence" value="ECO:0007669"/>
    <property type="project" value="UniProtKB-UniRule"/>
</dbReference>
<dbReference type="GO" id="GO:0043828">
    <property type="term" value="F:tRNA 2-selenouridine synthase activity"/>
    <property type="evidence" value="ECO:0007669"/>
    <property type="project" value="UniProtKB-EC"/>
</dbReference>
<dbReference type="GO" id="GO:0002098">
    <property type="term" value="P:tRNA wobble uridine modification"/>
    <property type="evidence" value="ECO:0007669"/>
    <property type="project" value="UniProtKB-UniRule"/>
</dbReference>
<dbReference type="Gene3D" id="3.40.250.10">
    <property type="entry name" value="Rhodanese-like domain"/>
    <property type="match status" value="1"/>
</dbReference>
<dbReference type="HAMAP" id="MF_01622">
    <property type="entry name" value="tRNA_sel_U_synth"/>
    <property type="match status" value="1"/>
</dbReference>
<dbReference type="InterPro" id="IPR027417">
    <property type="entry name" value="P-loop_NTPase"/>
</dbReference>
<dbReference type="InterPro" id="IPR001763">
    <property type="entry name" value="Rhodanese-like_dom"/>
</dbReference>
<dbReference type="InterPro" id="IPR036873">
    <property type="entry name" value="Rhodanese-like_dom_sf"/>
</dbReference>
<dbReference type="InterPro" id="IPR017582">
    <property type="entry name" value="SelU"/>
</dbReference>
<dbReference type="NCBIfam" id="NF008751">
    <property type="entry name" value="PRK11784.1-3"/>
    <property type="match status" value="1"/>
</dbReference>
<dbReference type="NCBIfam" id="TIGR03167">
    <property type="entry name" value="tRNA_sel_U_synt"/>
    <property type="match status" value="1"/>
</dbReference>
<dbReference type="PANTHER" id="PTHR30401">
    <property type="entry name" value="TRNA 2-SELENOURIDINE SYNTHASE"/>
    <property type="match status" value="1"/>
</dbReference>
<dbReference type="PANTHER" id="PTHR30401:SF0">
    <property type="entry name" value="TRNA 2-SELENOURIDINE SYNTHASE"/>
    <property type="match status" value="1"/>
</dbReference>
<dbReference type="SMART" id="SM00450">
    <property type="entry name" value="RHOD"/>
    <property type="match status" value="1"/>
</dbReference>
<dbReference type="SUPFAM" id="SSF52540">
    <property type="entry name" value="P-loop containing nucleoside triphosphate hydrolases"/>
    <property type="match status" value="1"/>
</dbReference>
<dbReference type="SUPFAM" id="SSF52821">
    <property type="entry name" value="Rhodanese/Cell cycle control phosphatase"/>
    <property type="match status" value="1"/>
</dbReference>
<dbReference type="PROSITE" id="PS50206">
    <property type="entry name" value="RHODANESE_3"/>
    <property type="match status" value="1"/>
</dbReference>
<comment type="function">
    <text evidence="1">Involved in the post-transcriptional modification of the uridine at the wobble position (U34) of tRNA(Lys), tRNA(Glu) and tRNA(Gln). Catalyzes the conversion of 2-thiouridine (S2U-RNA) to 2-selenouridine (Se2U-RNA). Acts in a two-step process involving geranylation of 2-thiouridine (S2U) to S-geranyl-2-thiouridine (geS2U) and subsequent selenation of the latter derivative to 2-selenouridine (Se2U) in the tRNA chain.</text>
</comment>
<comment type="catalytic activity">
    <reaction evidence="1">
        <text>5-methylaminomethyl-2-thiouridine(34) in tRNA + selenophosphate + (2E)-geranyl diphosphate + H2O + H(+) = 5-methylaminomethyl-2-selenouridine(34) in tRNA + (2E)-thiogeraniol + phosphate + diphosphate</text>
        <dbReference type="Rhea" id="RHEA:42716"/>
        <dbReference type="Rhea" id="RHEA-COMP:10195"/>
        <dbReference type="Rhea" id="RHEA-COMP:10196"/>
        <dbReference type="ChEBI" id="CHEBI:15377"/>
        <dbReference type="ChEBI" id="CHEBI:15378"/>
        <dbReference type="ChEBI" id="CHEBI:16144"/>
        <dbReference type="ChEBI" id="CHEBI:33019"/>
        <dbReference type="ChEBI" id="CHEBI:43474"/>
        <dbReference type="ChEBI" id="CHEBI:58057"/>
        <dbReference type="ChEBI" id="CHEBI:74455"/>
        <dbReference type="ChEBI" id="CHEBI:82743"/>
        <dbReference type="ChEBI" id="CHEBI:143703"/>
        <dbReference type="EC" id="2.9.1.3"/>
    </reaction>
    <physiologicalReaction direction="left-to-right" evidence="1">
        <dbReference type="Rhea" id="RHEA:42717"/>
    </physiologicalReaction>
</comment>
<comment type="catalytic activity">
    <reaction evidence="1">
        <text>5-methylaminomethyl-2-thiouridine(34) in tRNA + (2E)-geranyl diphosphate = 5-methylaminomethyl-S-(2E)-geranyl-thiouridine(34) in tRNA + diphosphate</text>
        <dbReference type="Rhea" id="RHEA:14085"/>
        <dbReference type="Rhea" id="RHEA-COMP:10195"/>
        <dbReference type="Rhea" id="RHEA-COMP:14654"/>
        <dbReference type="ChEBI" id="CHEBI:33019"/>
        <dbReference type="ChEBI" id="CHEBI:58057"/>
        <dbReference type="ChEBI" id="CHEBI:74455"/>
        <dbReference type="ChEBI" id="CHEBI:140632"/>
    </reaction>
    <physiologicalReaction direction="left-to-right" evidence="1">
        <dbReference type="Rhea" id="RHEA:14086"/>
    </physiologicalReaction>
</comment>
<comment type="catalytic activity">
    <reaction evidence="1">
        <text>5-methylaminomethyl-S-(2E)-geranyl-thiouridine(34) in tRNA + selenophosphate + H(+) = 5-methylaminomethyl-2-(Se-phospho)selenouridine(34) in tRNA + (2E)-thiogeraniol</text>
        <dbReference type="Rhea" id="RHEA:60172"/>
        <dbReference type="Rhea" id="RHEA-COMP:14654"/>
        <dbReference type="Rhea" id="RHEA-COMP:15523"/>
        <dbReference type="ChEBI" id="CHEBI:15378"/>
        <dbReference type="ChEBI" id="CHEBI:16144"/>
        <dbReference type="ChEBI" id="CHEBI:140632"/>
        <dbReference type="ChEBI" id="CHEBI:143702"/>
        <dbReference type="ChEBI" id="CHEBI:143703"/>
    </reaction>
    <physiologicalReaction direction="left-to-right" evidence="1">
        <dbReference type="Rhea" id="RHEA:60173"/>
    </physiologicalReaction>
</comment>
<comment type="catalytic activity">
    <reaction evidence="1">
        <text>5-methylaminomethyl-2-(Se-phospho)selenouridine(34) in tRNA + H2O = 5-methylaminomethyl-2-selenouridine(34) in tRNA + phosphate</text>
        <dbReference type="Rhea" id="RHEA:60176"/>
        <dbReference type="Rhea" id="RHEA-COMP:10196"/>
        <dbReference type="Rhea" id="RHEA-COMP:15523"/>
        <dbReference type="ChEBI" id="CHEBI:15377"/>
        <dbReference type="ChEBI" id="CHEBI:43474"/>
        <dbReference type="ChEBI" id="CHEBI:82743"/>
        <dbReference type="ChEBI" id="CHEBI:143702"/>
    </reaction>
    <physiologicalReaction direction="left-to-right" evidence="1">
        <dbReference type="Rhea" id="RHEA:60177"/>
    </physiologicalReaction>
</comment>
<comment type="subunit">
    <text evidence="1">Monomer.</text>
</comment>
<comment type="similarity">
    <text evidence="1">Belongs to the SelU family.</text>
</comment>
<gene>
    <name evidence="1" type="primary">selU</name>
    <name type="ordered locus">Veis_1622</name>
</gene>
<sequence length="365" mass="40257">MRQDDAQLRHIFLHDVPLLDVRAPVEFAQGAFPGAVNHPLMDDAERHQVGLCYRQQGQPAAIALGQQLVSGHTRRERIAAWAAFAQAHPDGLLYCLRGGLRSQIALQWLHSEAGIAYPRVPGGYKALRMFLIDTTQAAAQECDFVLLSGLTGTGKTALIAQLAQGLDLEGHANHRGSSFGQRLDGQPSQVDFEHRLAIDILKKQARGHRAFVLEDEGRHVGRCSVPLALRQRLERAPIVCLQDSFGARVERIVGDYVIGQCADFVAAHGPALGFERFSTRLLDSLGKLARRLGGARYQQLHADMQAALARQQASGDIDLHRHWIAALVRDYYDPMYAFQRQSRPGRIVFEGDLPAVLAYLRAGCG</sequence>
<feature type="chain" id="PRO_0000292721" description="tRNA 2-selenouridine synthase">
    <location>
        <begin position="1"/>
        <end position="365"/>
    </location>
</feature>
<feature type="domain" description="Rhodanese" evidence="1">
    <location>
        <begin position="12"/>
        <end position="136"/>
    </location>
</feature>
<feature type="active site" description="S-selanylcysteine intermediate" evidence="1">
    <location>
        <position position="95"/>
    </location>
</feature>
<reference key="1">
    <citation type="submission" date="2006-12" db="EMBL/GenBank/DDBJ databases">
        <title>Complete sequence of chromosome 1 of Verminephrobacter eiseniae EF01-2.</title>
        <authorList>
            <person name="Copeland A."/>
            <person name="Lucas S."/>
            <person name="Lapidus A."/>
            <person name="Barry K."/>
            <person name="Detter J.C."/>
            <person name="Glavina del Rio T."/>
            <person name="Dalin E."/>
            <person name="Tice H."/>
            <person name="Pitluck S."/>
            <person name="Chertkov O."/>
            <person name="Brettin T."/>
            <person name="Bruce D."/>
            <person name="Han C."/>
            <person name="Tapia R."/>
            <person name="Gilna P."/>
            <person name="Schmutz J."/>
            <person name="Larimer F."/>
            <person name="Land M."/>
            <person name="Hauser L."/>
            <person name="Kyrpides N."/>
            <person name="Kim E."/>
            <person name="Stahl D."/>
            <person name="Richardson P."/>
        </authorList>
    </citation>
    <scope>NUCLEOTIDE SEQUENCE [LARGE SCALE GENOMIC DNA]</scope>
    <source>
        <strain>EF01-2</strain>
    </source>
</reference>
<proteinExistence type="inferred from homology"/>
<keyword id="KW-1185">Reference proteome</keyword>
<keyword id="KW-0711">Selenium</keyword>
<keyword id="KW-0808">Transferase</keyword>
<accession>A1WIC3</accession>
<name>SELU_VEREI</name>
<organism>
    <name type="scientific">Verminephrobacter eiseniae (strain EF01-2)</name>
    <dbReference type="NCBI Taxonomy" id="391735"/>
    <lineage>
        <taxon>Bacteria</taxon>
        <taxon>Pseudomonadati</taxon>
        <taxon>Pseudomonadota</taxon>
        <taxon>Betaproteobacteria</taxon>
        <taxon>Burkholderiales</taxon>
        <taxon>Comamonadaceae</taxon>
        <taxon>Verminephrobacter</taxon>
    </lineage>
</organism>
<protein>
    <recommendedName>
        <fullName evidence="1">tRNA 2-selenouridine synthase</fullName>
        <ecNumber evidence="1">2.9.1.3</ecNumber>
    </recommendedName>
</protein>